<organism>
    <name type="scientific">Aspergillus oryzae (strain ATCC 42149 / RIB 40)</name>
    <name type="common">Yellow koji mold</name>
    <dbReference type="NCBI Taxonomy" id="510516"/>
    <lineage>
        <taxon>Eukaryota</taxon>
        <taxon>Fungi</taxon>
        <taxon>Dikarya</taxon>
        <taxon>Ascomycota</taxon>
        <taxon>Pezizomycotina</taxon>
        <taxon>Eurotiomycetes</taxon>
        <taxon>Eurotiomycetidae</taxon>
        <taxon>Eurotiales</taxon>
        <taxon>Aspergillaceae</taxon>
        <taxon>Aspergillus</taxon>
        <taxon>Aspergillus subgen. Circumdati</taxon>
    </lineage>
</organism>
<protein>
    <recommendedName>
        <fullName>ATP-dependent RNA helicase drs1</fullName>
        <ecNumber>3.6.4.13</ecNumber>
    </recommendedName>
</protein>
<keyword id="KW-0067">ATP-binding</keyword>
<keyword id="KW-0175">Coiled coil</keyword>
<keyword id="KW-0347">Helicase</keyword>
<keyword id="KW-0378">Hydrolase</keyword>
<keyword id="KW-0547">Nucleotide-binding</keyword>
<keyword id="KW-0539">Nucleus</keyword>
<keyword id="KW-1185">Reference proteome</keyword>
<keyword id="KW-0690">Ribosome biogenesis</keyword>
<keyword id="KW-0694">RNA-binding</keyword>
<name>DRS1_ASPOR</name>
<sequence>MAPPKKRTAPKDDDFVLTLSDDENDVFSGINEDGDDHLDEETAKSTTKKRKRDTAETTQSKNKKQKQQKQSKNGKQQKKVEEAASEPEEGSEEEEDAGEDDGALNSDFEFDVGAAAQKDVVEGFDGWGLDETKDGAKKNGDKQGVDIDEIISRRQAKKEAQLKKKPKKQEVESEDEGSGNEDDASDGGMSVDFQDDELMAEDGFGMGADGEDESGQSDAQESGSEDEHAGSDSEDSDDDDDDAASDNDSVATPVQHPDDVASDNDGSDIESEVDAEEEAKRKAFFAPEEQTSEQSAAELSKKSFQEFNLSRPILRGLAAVNFTNPTPIQRKTIPVALLGKDIVGSAVTGSGKTAAFVVPILERLLFRPRKVPTSRVAILMPTRELAVQCYNVATKLATYTDITFCQLVGGFSLREQENILKKRPDVIIATPGRFIDHMRNSASFTVDTLEILVLDEADRMLEDGFADELNEILTTIPKSRQTMLFSATMTDSVDKLIRVGLNRPVRLMVDSKKNTSMNLIQEFVRLRPGREDKRLGYLLHLCKEVYTGRVIVFFRQKKEAHRVRIAFGLLGLKAAELHGSMSQEQRIRSVENFREGKVSFLLATDLAARGLDIKGVETVINYEAPQSHEIYLHRVGRTARAGRSGRACTIAAEPDRKVVKAAVKASKAQGAKVASRVVDPAVADRWAQKAKDLEEEINAVLEEEKIEKQLAQAEMQVTRSENMIKHEAEIMSRPKRTWFASEREKILSKKAGAAELNGLDSVKSKKEKVRLSNKDKKRLDDSRQRNEGNIGWKKGKVDRESQKQGKIQKGKKENKKKGKK</sequence>
<dbReference type="EC" id="3.6.4.13"/>
<dbReference type="EMBL" id="BA000049">
    <property type="protein sequence ID" value="BAE56179.1"/>
    <property type="status" value="ALT_SEQ"/>
    <property type="molecule type" value="Genomic_DNA"/>
</dbReference>
<dbReference type="RefSeq" id="XP_001818181.2">
    <property type="nucleotide sequence ID" value="XM_001818129.2"/>
</dbReference>
<dbReference type="SMR" id="Q2UQI6"/>
<dbReference type="STRING" id="510516.Q2UQI6"/>
<dbReference type="EnsemblFungi" id="BAE56179">
    <property type="protein sequence ID" value="BAE56179"/>
    <property type="gene ID" value="AO090005001231"/>
</dbReference>
<dbReference type="VEuPathDB" id="FungiDB:AO090005001231"/>
<dbReference type="Proteomes" id="UP000006564">
    <property type="component" value="Chromosome 1"/>
</dbReference>
<dbReference type="GO" id="GO:0005829">
    <property type="term" value="C:cytosol"/>
    <property type="evidence" value="ECO:0007669"/>
    <property type="project" value="TreeGrafter"/>
</dbReference>
<dbReference type="GO" id="GO:0005730">
    <property type="term" value="C:nucleolus"/>
    <property type="evidence" value="ECO:0007669"/>
    <property type="project" value="UniProtKB-SubCell"/>
</dbReference>
<dbReference type="GO" id="GO:0030687">
    <property type="term" value="C:preribosome, large subunit precursor"/>
    <property type="evidence" value="ECO:0007669"/>
    <property type="project" value="EnsemblFungi"/>
</dbReference>
<dbReference type="GO" id="GO:0005524">
    <property type="term" value="F:ATP binding"/>
    <property type="evidence" value="ECO:0007669"/>
    <property type="project" value="UniProtKB-KW"/>
</dbReference>
<dbReference type="GO" id="GO:0016887">
    <property type="term" value="F:ATP hydrolysis activity"/>
    <property type="evidence" value="ECO:0007669"/>
    <property type="project" value="RHEA"/>
</dbReference>
<dbReference type="GO" id="GO:0003723">
    <property type="term" value="F:RNA binding"/>
    <property type="evidence" value="ECO:0007669"/>
    <property type="project" value="UniProtKB-KW"/>
</dbReference>
<dbReference type="GO" id="GO:0003724">
    <property type="term" value="F:RNA helicase activity"/>
    <property type="evidence" value="ECO:0007669"/>
    <property type="project" value="UniProtKB-EC"/>
</dbReference>
<dbReference type="GO" id="GO:0000027">
    <property type="term" value="P:ribosomal large subunit assembly"/>
    <property type="evidence" value="ECO:0007669"/>
    <property type="project" value="EnsemblFungi"/>
</dbReference>
<dbReference type="GO" id="GO:0006364">
    <property type="term" value="P:rRNA processing"/>
    <property type="evidence" value="ECO:0007669"/>
    <property type="project" value="EnsemblFungi"/>
</dbReference>
<dbReference type="CDD" id="cd17947">
    <property type="entry name" value="DEADc_DDX27"/>
    <property type="match status" value="1"/>
</dbReference>
<dbReference type="CDD" id="cd18787">
    <property type="entry name" value="SF2_C_DEAD"/>
    <property type="match status" value="1"/>
</dbReference>
<dbReference type="Gene3D" id="3.40.50.300">
    <property type="entry name" value="P-loop containing nucleotide triphosphate hydrolases"/>
    <property type="match status" value="2"/>
</dbReference>
<dbReference type="InterPro" id="IPR011545">
    <property type="entry name" value="DEAD/DEAH_box_helicase_dom"/>
</dbReference>
<dbReference type="InterPro" id="IPR050079">
    <property type="entry name" value="DEAD_box_RNA_helicase"/>
</dbReference>
<dbReference type="InterPro" id="IPR014001">
    <property type="entry name" value="Helicase_ATP-bd"/>
</dbReference>
<dbReference type="InterPro" id="IPR001650">
    <property type="entry name" value="Helicase_C-like"/>
</dbReference>
<dbReference type="InterPro" id="IPR027417">
    <property type="entry name" value="P-loop_NTPase"/>
</dbReference>
<dbReference type="InterPro" id="IPR000629">
    <property type="entry name" value="RNA-helicase_DEAD-box_CS"/>
</dbReference>
<dbReference type="InterPro" id="IPR014014">
    <property type="entry name" value="RNA_helicase_DEAD_Q_motif"/>
</dbReference>
<dbReference type="PANTHER" id="PTHR47959:SF1">
    <property type="entry name" value="ATP-DEPENDENT RNA HELICASE DBPA"/>
    <property type="match status" value="1"/>
</dbReference>
<dbReference type="PANTHER" id="PTHR47959">
    <property type="entry name" value="ATP-DEPENDENT RNA HELICASE RHLE-RELATED"/>
    <property type="match status" value="1"/>
</dbReference>
<dbReference type="Pfam" id="PF00270">
    <property type="entry name" value="DEAD"/>
    <property type="match status" value="1"/>
</dbReference>
<dbReference type="Pfam" id="PF00271">
    <property type="entry name" value="Helicase_C"/>
    <property type="match status" value="1"/>
</dbReference>
<dbReference type="SMART" id="SM00487">
    <property type="entry name" value="DEXDc"/>
    <property type="match status" value="1"/>
</dbReference>
<dbReference type="SMART" id="SM00490">
    <property type="entry name" value="HELICc"/>
    <property type="match status" value="1"/>
</dbReference>
<dbReference type="SUPFAM" id="SSF52540">
    <property type="entry name" value="P-loop containing nucleoside triphosphate hydrolases"/>
    <property type="match status" value="1"/>
</dbReference>
<dbReference type="PROSITE" id="PS00039">
    <property type="entry name" value="DEAD_ATP_HELICASE"/>
    <property type="match status" value="1"/>
</dbReference>
<dbReference type="PROSITE" id="PS51192">
    <property type="entry name" value="HELICASE_ATP_BIND_1"/>
    <property type="match status" value="1"/>
</dbReference>
<dbReference type="PROSITE" id="PS51194">
    <property type="entry name" value="HELICASE_CTER"/>
    <property type="match status" value="1"/>
</dbReference>
<dbReference type="PROSITE" id="PS51195">
    <property type="entry name" value="Q_MOTIF"/>
    <property type="match status" value="1"/>
</dbReference>
<comment type="function">
    <text evidence="1">ATP-binding RNA helicase involved in ribosome assembly.</text>
</comment>
<comment type="catalytic activity">
    <reaction>
        <text>ATP + H2O = ADP + phosphate + H(+)</text>
        <dbReference type="Rhea" id="RHEA:13065"/>
        <dbReference type="ChEBI" id="CHEBI:15377"/>
        <dbReference type="ChEBI" id="CHEBI:15378"/>
        <dbReference type="ChEBI" id="CHEBI:30616"/>
        <dbReference type="ChEBI" id="CHEBI:43474"/>
        <dbReference type="ChEBI" id="CHEBI:456216"/>
        <dbReference type="EC" id="3.6.4.13"/>
    </reaction>
</comment>
<comment type="subunit">
    <text evidence="1">Associates with pre-ribosomal particles.</text>
</comment>
<comment type="subcellular location">
    <subcellularLocation>
        <location evidence="1">Nucleus</location>
        <location evidence="1">Nucleolus</location>
    </subcellularLocation>
</comment>
<comment type="domain">
    <text>The Q motif is unique to and characteristic of the DEAD box family of RNA helicases and controls ATP binding and hydrolysis.</text>
</comment>
<comment type="similarity">
    <text evidence="6">Belongs to the DEAD box helicase family. DDX27/DRS1 subfamily.</text>
</comment>
<comment type="sequence caution" evidence="6">
    <conflict type="erroneous gene model prediction">
        <sequence resource="EMBL-CDS" id="BAE56179"/>
    </conflict>
</comment>
<reference key="1">
    <citation type="journal article" date="2005" name="Nature">
        <title>Genome sequencing and analysis of Aspergillus oryzae.</title>
        <authorList>
            <person name="Machida M."/>
            <person name="Asai K."/>
            <person name="Sano M."/>
            <person name="Tanaka T."/>
            <person name="Kumagai T."/>
            <person name="Terai G."/>
            <person name="Kusumoto K."/>
            <person name="Arima T."/>
            <person name="Akita O."/>
            <person name="Kashiwagi Y."/>
            <person name="Abe K."/>
            <person name="Gomi K."/>
            <person name="Horiuchi H."/>
            <person name="Kitamoto K."/>
            <person name="Kobayashi T."/>
            <person name="Takeuchi M."/>
            <person name="Denning D.W."/>
            <person name="Galagan J.E."/>
            <person name="Nierman W.C."/>
            <person name="Yu J."/>
            <person name="Archer D.B."/>
            <person name="Bennett J.W."/>
            <person name="Bhatnagar D."/>
            <person name="Cleveland T.E."/>
            <person name="Fedorova N.D."/>
            <person name="Gotoh O."/>
            <person name="Horikawa H."/>
            <person name="Hosoyama A."/>
            <person name="Ichinomiya M."/>
            <person name="Igarashi R."/>
            <person name="Iwashita K."/>
            <person name="Juvvadi P.R."/>
            <person name="Kato M."/>
            <person name="Kato Y."/>
            <person name="Kin T."/>
            <person name="Kokubun A."/>
            <person name="Maeda H."/>
            <person name="Maeyama N."/>
            <person name="Maruyama J."/>
            <person name="Nagasaki H."/>
            <person name="Nakajima T."/>
            <person name="Oda K."/>
            <person name="Okada K."/>
            <person name="Paulsen I."/>
            <person name="Sakamoto K."/>
            <person name="Sawano T."/>
            <person name="Takahashi M."/>
            <person name="Takase K."/>
            <person name="Terabayashi Y."/>
            <person name="Wortman J.R."/>
            <person name="Yamada O."/>
            <person name="Yamagata Y."/>
            <person name="Anazawa H."/>
            <person name="Hata Y."/>
            <person name="Koide Y."/>
            <person name="Komori T."/>
            <person name="Koyama Y."/>
            <person name="Minetoki T."/>
            <person name="Suharnan S."/>
            <person name="Tanaka A."/>
            <person name="Isono K."/>
            <person name="Kuhara S."/>
            <person name="Ogasawara N."/>
            <person name="Kikuchi H."/>
        </authorList>
    </citation>
    <scope>NUCLEOTIDE SEQUENCE [LARGE SCALE GENOMIC DNA]</scope>
    <source>
        <strain>ATCC 42149 / RIB 40</strain>
    </source>
</reference>
<accession>Q2UQI6</accession>
<proteinExistence type="inferred from homology"/>
<gene>
    <name type="primary">drs1</name>
    <name type="ORF">AO090005001231</name>
</gene>
<feature type="chain" id="PRO_0000232241" description="ATP-dependent RNA helicase drs1">
    <location>
        <begin position="1"/>
        <end position="820"/>
    </location>
</feature>
<feature type="domain" description="Helicase ATP-binding" evidence="3">
    <location>
        <begin position="333"/>
        <end position="507"/>
    </location>
</feature>
<feature type="domain" description="Helicase C-terminal" evidence="4">
    <location>
        <begin position="537"/>
        <end position="714"/>
    </location>
</feature>
<feature type="region of interest" description="Disordered" evidence="5">
    <location>
        <begin position="1"/>
        <end position="278"/>
    </location>
</feature>
<feature type="region of interest" description="Disordered" evidence="5">
    <location>
        <begin position="759"/>
        <end position="820"/>
    </location>
</feature>
<feature type="coiled-coil region" evidence="2">
    <location>
        <begin position="681"/>
        <end position="729"/>
    </location>
</feature>
<feature type="short sequence motif" description="Q motif">
    <location>
        <begin position="302"/>
        <end position="330"/>
    </location>
</feature>
<feature type="short sequence motif" description="DEAD box">
    <location>
        <begin position="455"/>
        <end position="458"/>
    </location>
</feature>
<feature type="compositionally biased region" description="Acidic residues" evidence="5">
    <location>
        <begin position="83"/>
        <end position="102"/>
    </location>
</feature>
<feature type="compositionally biased region" description="Basic and acidic residues" evidence="5">
    <location>
        <begin position="130"/>
        <end position="145"/>
    </location>
</feature>
<feature type="compositionally biased region" description="Acidic residues" evidence="5">
    <location>
        <begin position="172"/>
        <end position="185"/>
    </location>
</feature>
<feature type="compositionally biased region" description="Acidic residues" evidence="5">
    <location>
        <begin position="232"/>
        <end position="245"/>
    </location>
</feature>
<feature type="compositionally biased region" description="Acidic residues" evidence="5">
    <location>
        <begin position="260"/>
        <end position="277"/>
    </location>
</feature>
<feature type="compositionally biased region" description="Basic and acidic residues" evidence="5">
    <location>
        <begin position="769"/>
        <end position="786"/>
    </location>
</feature>
<feature type="compositionally biased region" description="Basic residues" evidence="5">
    <location>
        <begin position="806"/>
        <end position="820"/>
    </location>
</feature>
<feature type="binding site" evidence="3">
    <location>
        <begin position="346"/>
        <end position="353"/>
    </location>
    <ligand>
        <name>ATP</name>
        <dbReference type="ChEBI" id="CHEBI:30616"/>
    </ligand>
</feature>
<evidence type="ECO:0000250" key="1"/>
<evidence type="ECO:0000255" key="2"/>
<evidence type="ECO:0000255" key="3">
    <source>
        <dbReference type="PROSITE-ProRule" id="PRU00541"/>
    </source>
</evidence>
<evidence type="ECO:0000255" key="4">
    <source>
        <dbReference type="PROSITE-ProRule" id="PRU00542"/>
    </source>
</evidence>
<evidence type="ECO:0000256" key="5">
    <source>
        <dbReference type="SAM" id="MobiDB-lite"/>
    </source>
</evidence>
<evidence type="ECO:0000305" key="6"/>